<reference key="1">
    <citation type="journal article" date="2007" name="J. Bacteriol.">
        <title>The complete genome sequence of Roseobacter denitrificans reveals a mixotrophic rather than photosynthetic metabolism.</title>
        <authorList>
            <person name="Swingley W.D."/>
            <person name="Sadekar S."/>
            <person name="Mastrian S.D."/>
            <person name="Matthies H.J."/>
            <person name="Hao J."/>
            <person name="Ramos H."/>
            <person name="Acharya C.R."/>
            <person name="Conrad A.L."/>
            <person name="Taylor H.L."/>
            <person name="Dejesa L.C."/>
            <person name="Shah M.K."/>
            <person name="O'Huallachain M.E."/>
            <person name="Lince M.T."/>
            <person name="Blankenship R.E."/>
            <person name="Beatty J.T."/>
            <person name="Touchman J.W."/>
        </authorList>
    </citation>
    <scope>NUCLEOTIDE SEQUENCE [LARGE SCALE GENOMIC DNA]</scope>
    <source>
        <strain>ATCC 33942 / OCh 114</strain>
    </source>
</reference>
<protein>
    <recommendedName>
        <fullName evidence="1">DNA-directed RNA polymerase subunit alpha</fullName>
        <shortName evidence="1">RNAP subunit alpha</shortName>
        <ecNumber evidence="1">2.7.7.6</ecNumber>
    </recommendedName>
    <alternativeName>
        <fullName evidence="1">RNA polymerase subunit alpha</fullName>
    </alternativeName>
    <alternativeName>
        <fullName evidence="1">Transcriptase subunit alpha</fullName>
    </alternativeName>
</protein>
<accession>Q16AB8</accession>
<feature type="chain" id="PRO_0000264539" description="DNA-directed RNA polymerase subunit alpha">
    <location>
        <begin position="1"/>
        <end position="338"/>
    </location>
</feature>
<feature type="region of interest" description="Alpha N-terminal domain (alpha-NTD)" evidence="1">
    <location>
        <begin position="1"/>
        <end position="234"/>
    </location>
</feature>
<feature type="region of interest" description="Alpha C-terminal domain (alpha-CTD)" evidence="1">
    <location>
        <begin position="250"/>
        <end position="338"/>
    </location>
</feature>
<comment type="function">
    <text evidence="1">DNA-dependent RNA polymerase catalyzes the transcription of DNA into RNA using the four ribonucleoside triphosphates as substrates.</text>
</comment>
<comment type="catalytic activity">
    <reaction evidence="1">
        <text>RNA(n) + a ribonucleoside 5'-triphosphate = RNA(n+1) + diphosphate</text>
        <dbReference type="Rhea" id="RHEA:21248"/>
        <dbReference type="Rhea" id="RHEA-COMP:14527"/>
        <dbReference type="Rhea" id="RHEA-COMP:17342"/>
        <dbReference type="ChEBI" id="CHEBI:33019"/>
        <dbReference type="ChEBI" id="CHEBI:61557"/>
        <dbReference type="ChEBI" id="CHEBI:140395"/>
        <dbReference type="EC" id="2.7.7.6"/>
    </reaction>
</comment>
<comment type="subunit">
    <text evidence="1">Homodimer. The RNAP catalytic core consists of 2 alpha, 1 beta, 1 beta' and 1 omega subunit. When a sigma factor is associated with the core the holoenzyme is formed, which can initiate transcription.</text>
</comment>
<comment type="domain">
    <text evidence="1">The N-terminal domain is essential for RNAP assembly and basal transcription, whereas the C-terminal domain is involved in interaction with transcriptional regulators and with upstream promoter elements.</text>
</comment>
<comment type="similarity">
    <text evidence="1">Belongs to the RNA polymerase alpha chain family.</text>
</comment>
<comment type="sequence caution" evidence="2">
    <conflict type="erroneous initiation">
        <sequence resource="EMBL-CDS" id="ABG31075"/>
    </conflict>
</comment>
<proteinExistence type="inferred from homology"/>
<keyword id="KW-0240">DNA-directed RNA polymerase</keyword>
<keyword id="KW-0548">Nucleotidyltransferase</keyword>
<keyword id="KW-1185">Reference proteome</keyword>
<keyword id="KW-0804">Transcription</keyword>
<keyword id="KW-0808">Transferase</keyword>
<sequence>MIHKNWAELIKPQQLDVKPGNDPARQATVTAEPLERGFGLTMGNALRRVLMSSLQGAAITSVQIDNVLHEFSSVAGVREDVTDIILNLKGVSIRMEVEGPKRLSISAKGPGVVTAGDISESAGIEILNRDHVICHLDDGADVYMELTVNQGKGYVSAEKNKPEDAPIGLIPIDAIYSPVKKVSYDVQPTREGQVLDYDKLTMKVETDGSLTPDDAVAFAARILQDQLGIFVNFEEPESASRADEDDGLEFNPLLLKKVDDLELSVRSANCLKNDNIVYIGDLIQKTEAEMLRTPNFGRKSLNEIKEVLSGMGLHLGMDVEDWPPDNIEDLAKKFEDSF</sequence>
<evidence type="ECO:0000255" key="1">
    <source>
        <dbReference type="HAMAP-Rule" id="MF_00059"/>
    </source>
</evidence>
<evidence type="ECO:0000305" key="2"/>
<gene>
    <name evidence="1" type="primary">rpoA</name>
    <name type="ordered locus">RD1_1437</name>
</gene>
<name>RPOA_ROSDO</name>
<dbReference type="EC" id="2.7.7.6" evidence="1"/>
<dbReference type="EMBL" id="CP000362">
    <property type="protein sequence ID" value="ABG31075.1"/>
    <property type="status" value="ALT_INIT"/>
    <property type="molecule type" value="Genomic_DNA"/>
</dbReference>
<dbReference type="RefSeq" id="WP_044033372.1">
    <property type="nucleotide sequence ID" value="NC_008209.1"/>
</dbReference>
<dbReference type="SMR" id="Q16AB8"/>
<dbReference type="STRING" id="375451.RD1_1437"/>
<dbReference type="KEGG" id="rde:RD1_1437"/>
<dbReference type="eggNOG" id="COG0202">
    <property type="taxonomic scope" value="Bacteria"/>
</dbReference>
<dbReference type="HOGENOM" id="CLU_053084_0_0_5"/>
<dbReference type="OrthoDB" id="9805706at2"/>
<dbReference type="Proteomes" id="UP000007029">
    <property type="component" value="Chromosome"/>
</dbReference>
<dbReference type="GO" id="GO:0005737">
    <property type="term" value="C:cytoplasm"/>
    <property type="evidence" value="ECO:0007669"/>
    <property type="project" value="UniProtKB-ARBA"/>
</dbReference>
<dbReference type="GO" id="GO:0000428">
    <property type="term" value="C:DNA-directed RNA polymerase complex"/>
    <property type="evidence" value="ECO:0007669"/>
    <property type="project" value="UniProtKB-KW"/>
</dbReference>
<dbReference type="GO" id="GO:0003677">
    <property type="term" value="F:DNA binding"/>
    <property type="evidence" value="ECO:0007669"/>
    <property type="project" value="UniProtKB-UniRule"/>
</dbReference>
<dbReference type="GO" id="GO:0003899">
    <property type="term" value="F:DNA-directed RNA polymerase activity"/>
    <property type="evidence" value="ECO:0007669"/>
    <property type="project" value="UniProtKB-UniRule"/>
</dbReference>
<dbReference type="GO" id="GO:0046983">
    <property type="term" value="F:protein dimerization activity"/>
    <property type="evidence" value="ECO:0007669"/>
    <property type="project" value="InterPro"/>
</dbReference>
<dbReference type="GO" id="GO:0006351">
    <property type="term" value="P:DNA-templated transcription"/>
    <property type="evidence" value="ECO:0007669"/>
    <property type="project" value="UniProtKB-UniRule"/>
</dbReference>
<dbReference type="CDD" id="cd06928">
    <property type="entry name" value="RNAP_alpha_NTD"/>
    <property type="match status" value="1"/>
</dbReference>
<dbReference type="FunFam" id="1.10.150.20:FF:000001">
    <property type="entry name" value="DNA-directed RNA polymerase subunit alpha"/>
    <property type="match status" value="1"/>
</dbReference>
<dbReference type="FunFam" id="2.170.120.12:FF:000001">
    <property type="entry name" value="DNA-directed RNA polymerase subunit alpha"/>
    <property type="match status" value="1"/>
</dbReference>
<dbReference type="Gene3D" id="1.10.150.20">
    <property type="entry name" value="5' to 3' exonuclease, C-terminal subdomain"/>
    <property type="match status" value="1"/>
</dbReference>
<dbReference type="Gene3D" id="2.170.120.12">
    <property type="entry name" value="DNA-directed RNA polymerase, insert domain"/>
    <property type="match status" value="1"/>
</dbReference>
<dbReference type="Gene3D" id="3.30.1360.10">
    <property type="entry name" value="RNA polymerase, RBP11-like subunit"/>
    <property type="match status" value="1"/>
</dbReference>
<dbReference type="HAMAP" id="MF_00059">
    <property type="entry name" value="RNApol_bact_RpoA"/>
    <property type="match status" value="1"/>
</dbReference>
<dbReference type="InterPro" id="IPR011262">
    <property type="entry name" value="DNA-dir_RNA_pol_insert"/>
</dbReference>
<dbReference type="InterPro" id="IPR011263">
    <property type="entry name" value="DNA-dir_RNA_pol_RpoA/D/Rpb3"/>
</dbReference>
<dbReference type="InterPro" id="IPR011773">
    <property type="entry name" value="DNA-dir_RpoA"/>
</dbReference>
<dbReference type="InterPro" id="IPR036603">
    <property type="entry name" value="RBP11-like"/>
</dbReference>
<dbReference type="InterPro" id="IPR011260">
    <property type="entry name" value="RNAP_asu_C"/>
</dbReference>
<dbReference type="InterPro" id="IPR036643">
    <property type="entry name" value="RNApol_insert_sf"/>
</dbReference>
<dbReference type="NCBIfam" id="NF003513">
    <property type="entry name" value="PRK05182.1-2"/>
    <property type="match status" value="1"/>
</dbReference>
<dbReference type="NCBIfam" id="NF003519">
    <property type="entry name" value="PRK05182.2-5"/>
    <property type="match status" value="1"/>
</dbReference>
<dbReference type="NCBIfam" id="TIGR02027">
    <property type="entry name" value="rpoA"/>
    <property type="match status" value="1"/>
</dbReference>
<dbReference type="Pfam" id="PF01000">
    <property type="entry name" value="RNA_pol_A_bac"/>
    <property type="match status" value="1"/>
</dbReference>
<dbReference type="Pfam" id="PF03118">
    <property type="entry name" value="RNA_pol_A_CTD"/>
    <property type="match status" value="1"/>
</dbReference>
<dbReference type="Pfam" id="PF01193">
    <property type="entry name" value="RNA_pol_L"/>
    <property type="match status" value="1"/>
</dbReference>
<dbReference type="SMART" id="SM00662">
    <property type="entry name" value="RPOLD"/>
    <property type="match status" value="1"/>
</dbReference>
<dbReference type="SUPFAM" id="SSF47789">
    <property type="entry name" value="C-terminal domain of RNA polymerase alpha subunit"/>
    <property type="match status" value="1"/>
</dbReference>
<dbReference type="SUPFAM" id="SSF56553">
    <property type="entry name" value="Insert subdomain of RNA polymerase alpha subunit"/>
    <property type="match status" value="1"/>
</dbReference>
<dbReference type="SUPFAM" id="SSF55257">
    <property type="entry name" value="RBP11-like subunits of RNA polymerase"/>
    <property type="match status" value="1"/>
</dbReference>
<organism>
    <name type="scientific">Roseobacter denitrificans (strain ATCC 33942 / OCh 114)</name>
    <name type="common">Erythrobacter sp. (strain OCh 114)</name>
    <name type="synonym">Roseobacter denitrificans</name>
    <dbReference type="NCBI Taxonomy" id="375451"/>
    <lineage>
        <taxon>Bacteria</taxon>
        <taxon>Pseudomonadati</taxon>
        <taxon>Pseudomonadota</taxon>
        <taxon>Alphaproteobacteria</taxon>
        <taxon>Rhodobacterales</taxon>
        <taxon>Roseobacteraceae</taxon>
        <taxon>Roseobacter</taxon>
    </lineage>
</organism>